<keyword id="KW-1185">Reference proteome</keyword>
<reference key="1">
    <citation type="journal article" date="1996" name="Nucleic Acids Res.">
        <title>Complete sequence analysis of the genome of the bacterium Mycoplasma pneumoniae.</title>
        <authorList>
            <person name="Himmelreich R."/>
            <person name="Hilbert H."/>
            <person name="Plagens H."/>
            <person name="Pirkl E."/>
            <person name="Li B.-C."/>
            <person name="Herrmann R."/>
        </authorList>
    </citation>
    <scope>NUCLEOTIDE SEQUENCE [LARGE SCALE GENOMIC DNA]</scope>
    <source>
        <strain>ATCC 29342 / M129 / Subtype 1</strain>
    </source>
</reference>
<reference key="2">
    <citation type="journal article" date="2000" name="Nucleic Acids Res.">
        <title>Re-annotating the Mycoplasma pneumoniae genome sequence: adding value, function and reading frames.</title>
        <authorList>
            <person name="Dandekar T."/>
            <person name="Huynen M."/>
            <person name="Regula J.T."/>
            <person name="Ueberle B."/>
            <person name="Zimmermann C.U."/>
            <person name="Andrade M.A."/>
            <person name="Doerks T."/>
            <person name="Sanchez-Pulido L."/>
            <person name="Snel B."/>
            <person name="Suyama M."/>
            <person name="Yuan Y.P."/>
            <person name="Herrmann R."/>
            <person name="Bork P."/>
        </authorList>
    </citation>
    <scope>IDENTIFICATION</scope>
    <source>
        <strain>ATCC 29342 / M129 / Subtype 1</strain>
    </source>
</reference>
<reference key="3">
    <citation type="journal article" date="2000" name="Electrophoresis">
        <title>Towards a two-dimensional proteome map of Mycoplasma pneumoniae.</title>
        <authorList>
            <person name="Regula J.T."/>
            <person name="Ueberle B."/>
            <person name="Boguth G."/>
            <person name="Goerg A."/>
            <person name="Schnoelzer M."/>
            <person name="Herrmann R."/>
            <person name="Frank R."/>
        </authorList>
    </citation>
    <scope>IDENTIFICATION BY MASS SPECTROMETRY</scope>
    <source>
        <strain>ATCC 29342 / M129 / Subtype 1</strain>
    </source>
</reference>
<proteinExistence type="evidence at protein level"/>
<organism>
    <name type="scientific">Mycoplasma pneumoniae (strain ATCC 29342 / M129 / Subtype 1)</name>
    <name type="common">Mycoplasmoides pneumoniae</name>
    <dbReference type="NCBI Taxonomy" id="272634"/>
    <lineage>
        <taxon>Bacteria</taxon>
        <taxon>Bacillati</taxon>
        <taxon>Mycoplasmatota</taxon>
        <taxon>Mycoplasmoidales</taxon>
        <taxon>Mycoplasmoidaceae</taxon>
        <taxon>Mycoplasmoides</taxon>
    </lineage>
</organism>
<gene>
    <name type="ordered locus">MPN_377</name>
    <name type="ORF">A19_orf74</name>
    <name type="ORF">MP459.1</name>
</gene>
<dbReference type="EMBL" id="U00089">
    <property type="protein sequence ID" value="AAG34753.1"/>
    <property type="molecule type" value="Genomic_DNA"/>
</dbReference>
<dbReference type="RefSeq" id="NP_110065.1">
    <property type="nucleotide sequence ID" value="NC_000912.1"/>
</dbReference>
<dbReference type="RefSeq" id="WP_010874733.1">
    <property type="nucleotide sequence ID" value="NZ_OU342337.1"/>
</dbReference>
<dbReference type="SMR" id="Q9EXD3"/>
<dbReference type="IntAct" id="Q9EXD3">
    <property type="interactions" value="1"/>
</dbReference>
<dbReference type="STRING" id="272634.MPN_377"/>
<dbReference type="EnsemblBacteria" id="AAG34753">
    <property type="protein sequence ID" value="AAG34753"/>
    <property type="gene ID" value="MPN_377"/>
</dbReference>
<dbReference type="KEGG" id="mpn:MPN_377"/>
<dbReference type="PATRIC" id="fig|272634.6.peg.408"/>
<dbReference type="HOGENOM" id="CLU_2683971_0_0_14"/>
<dbReference type="OrthoDB" id="9975384at2"/>
<dbReference type="BioCyc" id="MPNE272634:G1GJ3-598-MONOMER"/>
<dbReference type="Proteomes" id="UP000000808">
    <property type="component" value="Chromosome"/>
</dbReference>
<feature type="chain" id="PRO_0000210670" description="Uncharacterized protein MPN_377">
    <location>
        <begin position="1"/>
        <end position="74"/>
    </location>
</feature>
<comment type="similarity">
    <text evidence="1">To U.parvum UU416.</text>
</comment>
<evidence type="ECO:0000305" key="1"/>
<protein>
    <recommendedName>
        <fullName>Uncharacterized protein MPN_377</fullName>
    </recommendedName>
</protein>
<sequence>MSKDKKNKVEQLEPVDLFERTKLEDTQVLNDVELDDIKKLEELKKELENTFEPRTRIEIKREIKELERKLRRNR</sequence>
<accession>Q9EXD3</accession>
<name>Y377_MYCPN</name>